<dbReference type="EMBL" id="AC026271">
    <property type="status" value="NOT_ANNOTATED_CDS"/>
    <property type="molecule type" value="Genomic_DNA"/>
</dbReference>
<dbReference type="RefSeq" id="NP_001138517.1">
    <property type="nucleotide sequence ID" value="NM_001145045.1"/>
</dbReference>
<dbReference type="SMR" id="P0CG31"/>
<dbReference type="BioGRID" id="609690">
    <property type="interactions" value="1"/>
</dbReference>
<dbReference type="IntAct" id="P0CG31">
    <property type="interactions" value="1"/>
</dbReference>
<dbReference type="iPTMnet" id="P0CG31"/>
<dbReference type="PhosphoSitePlus" id="P0CG31"/>
<dbReference type="BioMuta" id="ZNF286B"/>
<dbReference type="DMDM" id="300681206"/>
<dbReference type="jPOST" id="P0CG31"/>
<dbReference type="MassIVE" id="P0CG31"/>
<dbReference type="PaxDb" id="9606-ENSP00000461413"/>
<dbReference type="PeptideAtlas" id="P0CG31"/>
<dbReference type="ProteomicsDB" id="52461"/>
<dbReference type="Pumba" id="P0CG31"/>
<dbReference type="UCSC" id="uc010vyd.3">
    <property type="organism name" value="human"/>
</dbReference>
<dbReference type="AGR" id="HGNC:33241"/>
<dbReference type="GeneCards" id="ZNF286B"/>
<dbReference type="HGNC" id="HGNC:33241">
    <property type="gene designation" value="ZNF286B"/>
</dbReference>
<dbReference type="neXtProt" id="NX_P0CG31"/>
<dbReference type="PharmGKB" id="PA162410081"/>
<dbReference type="eggNOG" id="KOG1721">
    <property type="taxonomic scope" value="Eukaryota"/>
</dbReference>
<dbReference type="HOGENOM" id="CLU_002678_0_16_1"/>
<dbReference type="InParanoid" id="P0CG31"/>
<dbReference type="PAN-GO" id="P0CG31">
    <property type="GO annotations" value="4 GO annotations based on evolutionary models"/>
</dbReference>
<dbReference type="PhylomeDB" id="P0CG31"/>
<dbReference type="TreeFam" id="TF337055"/>
<dbReference type="PathwayCommons" id="P0CG31"/>
<dbReference type="BioGRID-ORCS" id="729288">
    <property type="hits" value="15 hits in 1054 CRISPR screens"/>
</dbReference>
<dbReference type="ChiTaRS" id="ZNF286B">
    <property type="organism name" value="human"/>
</dbReference>
<dbReference type="GenomeRNAi" id="729288"/>
<dbReference type="Pharos" id="P0CG31">
    <property type="development level" value="Tdark"/>
</dbReference>
<dbReference type="Proteomes" id="UP000005640">
    <property type="component" value="Unplaced"/>
</dbReference>
<dbReference type="RNAct" id="P0CG31">
    <property type="molecule type" value="protein"/>
</dbReference>
<dbReference type="GO" id="GO:0005634">
    <property type="term" value="C:nucleus"/>
    <property type="evidence" value="ECO:0000318"/>
    <property type="project" value="GO_Central"/>
</dbReference>
<dbReference type="GO" id="GO:0000981">
    <property type="term" value="F:DNA-binding transcription factor activity, RNA polymerase II-specific"/>
    <property type="evidence" value="ECO:0000318"/>
    <property type="project" value="GO_Central"/>
</dbReference>
<dbReference type="GO" id="GO:0000978">
    <property type="term" value="F:RNA polymerase II cis-regulatory region sequence-specific DNA binding"/>
    <property type="evidence" value="ECO:0000318"/>
    <property type="project" value="GO_Central"/>
</dbReference>
<dbReference type="GO" id="GO:0008270">
    <property type="term" value="F:zinc ion binding"/>
    <property type="evidence" value="ECO:0007669"/>
    <property type="project" value="UniProtKB-KW"/>
</dbReference>
<dbReference type="GO" id="GO:0006357">
    <property type="term" value="P:regulation of transcription by RNA polymerase II"/>
    <property type="evidence" value="ECO:0000318"/>
    <property type="project" value="GO_Central"/>
</dbReference>
<dbReference type="FunFam" id="3.30.160.60:FF:001772">
    <property type="entry name" value="Uncharacterized protein"/>
    <property type="match status" value="1"/>
</dbReference>
<dbReference type="FunFam" id="3.30.160.60:FF:000478">
    <property type="entry name" value="Zinc finger protein 133"/>
    <property type="match status" value="1"/>
</dbReference>
<dbReference type="FunFam" id="3.30.160.60:FF:000424">
    <property type="entry name" value="Zinc finger protein 140"/>
    <property type="match status" value="1"/>
</dbReference>
<dbReference type="FunFam" id="3.30.160.60:FF:001337">
    <property type="entry name" value="Zinc finger protein 286A"/>
    <property type="match status" value="1"/>
</dbReference>
<dbReference type="FunFam" id="3.30.160.60:FF:001434">
    <property type="entry name" value="zinc finger protein 286A isoform X1"/>
    <property type="match status" value="1"/>
</dbReference>
<dbReference type="FunFam" id="3.30.160.60:FF:000352">
    <property type="entry name" value="zinc finger protein 3 homolog"/>
    <property type="match status" value="1"/>
</dbReference>
<dbReference type="FunFam" id="3.30.160.60:FF:002090">
    <property type="entry name" value="Zinc finger protein 473"/>
    <property type="match status" value="1"/>
</dbReference>
<dbReference type="FunFam" id="3.30.160.60:FF:000737">
    <property type="entry name" value="Zinc finger protein 565"/>
    <property type="match status" value="2"/>
</dbReference>
<dbReference type="FunFam" id="3.30.160.60:FF:000149">
    <property type="entry name" value="Zinc finger protein 569"/>
    <property type="match status" value="1"/>
</dbReference>
<dbReference type="Gene3D" id="3.30.160.60">
    <property type="entry name" value="Classic Zinc Finger"/>
    <property type="match status" value="10"/>
</dbReference>
<dbReference type="InterPro" id="IPR036236">
    <property type="entry name" value="Znf_C2H2_sf"/>
</dbReference>
<dbReference type="InterPro" id="IPR013087">
    <property type="entry name" value="Znf_C2H2_type"/>
</dbReference>
<dbReference type="PANTHER" id="PTHR24393">
    <property type="entry name" value="ZINC FINGER PROTEIN"/>
    <property type="match status" value="1"/>
</dbReference>
<dbReference type="PANTHER" id="PTHR24393:SF159">
    <property type="entry name" value="ZINC FINGER PROTEIN 345-RELATED"/>
    <property type="match status" value="1"/>
</dbReference>
<dbReference type="Pfam" id="PF00096">
    <property type="entry name" value="zf-C2H2"/>
    <property type="match status" value="9"/>
</dbReference>
<dbReference type="SMART" id="SM00355">
    <property type="entry name" value="ZnF_C2H2"/>
    <property type="match status" value="10"/>
</dbReference>
<dbReference type="SUPFAM" id="SSF57667">
    <property type="entry name" value="beta-beta-alpha zinc fingers"/>
    <property type="match status" value="5"/>
</dbReference>
<dbReference type="PROSITE" id="PS00028">
    <property type="entry name" value="ZINC_FINGER_C2H2_1"/>
    <property type="match status" value="10"/>
</dbReference>
<dbReference type="PROSITE" id="PS50157">
    <property type="entry name" value="ZINC_FINGER_C2H2_2"/>
    <property type="match status" value="10"/>
</dbReference>
<comment type="function">
    <text evidence="1">May be involved in transcriptional regulation.</text>
</comment>
<comment type="subcellular location">
    <subcellularLocation>
        <location evidence="4">Nucleus</location>
    </subcellularLocation>
</comment>
<comment type="similarity">
    <text evidence="4">Belongs to the krueppel C2H2-type zinc-finger protein family.</text>
</comment>
<comment type="caution">
    <text evidence="4">Could be the product of a pseudogene.</text>
</comment>
<reference key="1">
    <citation type="journal article" date="2006" name="Nature">
        <title>DNA sequence of human chromosome 17 and analysis of rearrangement in the human lineage.</title>
        <authorList>
            <person name="Zody M.C."/>
            <person name="Garber M."/>
            <person name="Adams D.J."/>
            <person name="Sharpe T."/>
            <person name="Harrow J."/>
            <person name="Lupski J.R."/>
            <person name="Nicholson C."/>
            <person name="Searle S.M."/>
            <person name="Wilming L."/>
            <person name="Young S.K."/>
            <person name="Abouelleil A."/>
            <person name="Allen N.R."/>
            <person name="Bi W."/>
            <person name="Bloom T."/>
            <person name="Borowsky M.L."/>
            <person name="Bugalter B.E."/>
            <person name="Butler J."/>
            <person name="Chang J.L."/>
            <person name="Chen C.-K."/>
            <person name="Cook A."/>
            <person name="Corum B."/>
            <person name="Cuomo C.A."/>
            <person name="de Jong P.J."/>
            <person name="DeCaprio D."/>
            <person name="Dewar K."/>
            <person name="FitzGerald M."/>
            <person name="Gilbert J."/>
            <person name="Gibson R."/>
            <person name="Gnerre S."/>
            <person name="Goldstein S."/>
            <person name="Grafham D.V."/>
            <person name="Grocock R."/>
            <person name="Hafez N."/>
            <person name="Hagopian D.S."/>
            <person name="Hart E."/>
            <person name="Norman C.H."/>
            <person name="Humphray S."/>
            <person name="Jaffe D.B."/>
            <person name="Jones M."/>
            <person name="Kamal M."/>
            <person name="Khodiyar V.K."/>
            <person name="LaButti K."/>
            <person name="Laird G."/>
            <person name="Lehoczky J."/>
            <person name="Liu X."/>
            <person name="Lokyitsang T."/>
            <person name="Loveland J."/>
            <person name="Lui A."/>
            <person name="Macdonald P."/>
            <person name="Major J.E."/>
            <person name="Matthews L."/>
            <person name="Mauceli E."/>
            <person name="McCarroll S.A."/>
            <person name="Mihalev A.H."/>
            <person name="Mudge J."/>
            <person name="Nguyen C."/>
            <person name="Nicol R."/>
            <person name="O'Leary S.B."/>
            <person name="Osoegawa K."/>
            <person name="Schwartz D.C."/>
            <person name="Shaw-Smith C."/>
            <person name="Stankiewicz P."/>
            <person name="Steward C."/>
            <person name="Swarbreck D."/>
            <person name="Venkataraman V."/>
            <person name="Whittaker C.A."/>
            <person name="Yang X."/>
            <person name="Zimmer A.R."/>
            <person name="Bradley A."/>
            <person name="Hubbard T."/>
            <person name="Birren B.W."/>
            <person name="Rogers J."/>
            <person name="Lander E.S."/>
            <person name="Nusbaum C."/>
        </authorList>
    </citation>
    <scope>NUCLEOTIDE SEQUENCE [LARGE SCALE GENOMIC DNA]</scope>
</reference>
<name>Z286B_HUMAN</name>
<evidence type="ECO:0000250" key="1"/>
<evidence type="ECO:0000255" key="2">
    <source>
        <dbReference type="PROSITE-ProRule" id="PRU00042"/>
    </source>
</evidence>
<evidence type="ECO:0000256" key="3">
    <source>
        <dbReference type="SAM" id="MobiDB-lite"/>
    </source>
</evidence>
<evidence type="ECO:0000305" key="4"/>
<keyword id="KW-0238">DNA-binding</keyword>
<keyword id="KW-0479">Metal-binding</keyword>
<keyword id="KW-0539">Nucleus</keyword>
<keyword id="KW-1185">Reference proteome</keyword>
<keyword id="KW-0677">Repeat</keyword>
<keyword id="KW-0804">Transcription</keyword>
<keyword id="KW-0805">Transcription regulation</keyword>
<keyword id="KW-0862">Zinc</keyword>
<keyword id="KW-0863">Zinc-finger</keyword>
<organism>
    <name type="scientific">Homo sapiens</name>
    <name type="common">Human</name>
    <dbReference type="NCBI Taxonomy" id="9606"/>
    <lineage>
        <taxon>Eukaryota</taxon>
        <taxon>Metazoa</taxon>
        <taxon>Chordata</taxon>
        <taxon>Craniata</taxon>
        <taxon>Vertebrata</taxon>
        <taxon>Euteleostomi</taxon>
        <taxon>Mammalia</taxon>
        <taxon>Eutheria</taxon>
        <taxon>Euarchontoglires</taxon>
        <taxon>Primates</taxon>
        <taxon>Haplorrhini</taxon>
        <taxon>Catarrhini</taxon>
        <taxon>Hominidae</taxon>
        <taxon>Homo</taxon>
    </lineage>
</organism>
<protein>
    <recommendedName>
        <fullName>Putative zinc finger protein 286B</fullName>
    </recommendedName>
</protein>
<accession>P0CG31</accession>
<sequence>METDLAEMPEKGVLSSQDSPHFQEKSTEEGEVAALRLTARSQAAAAAAAPGSRSLRGVHVPPPLHPAPAREEIKSTCSLKACFSLSLTLTYYRTAFLLSTENEGNLHFQCPSDVETRPQSKDSTSVQDFSKAESCKVAIIDRLTRNSVYDSNLEAALECENWLEKQQGNQERHLREMFTHMNSLSEETDHEHDVYWKSFNQKSVLITEDRVPKGSYAFHTLEKSLKQKSNLMKKQRTYKEKKPHKCNDCGELFTCHSVHIQHQRVHTGEKPYTCNECGKSFSHRANLTKHQRTHTRILFECRECKKTFTESSSLATHQRIHVGERPYECNECGKGFNRSTHLVQHQLIHTGVRPYECNECDKAFIHSSALIKHQRTHTGEKPYKCQECGKAFSHCSSLTKHQRVHTGEKPYECSECGKTFSQSTHLVQHQRIHTGEKPYECSECGKTFSQSSNFAKHQRIHIGKKPYKCSECGKAFIHSSALIQHQRTHTGEKPFRCNECGKSFKCSSSLIRHQRVHTEEQP</sequence>
<feature type="chain" id="PRO_0000395360" description="Putative zinc finger protein 286B">
    <location>
        <begin position="1"/>
        <end position="522"/>
    </location>
</feature>
<feature type="zinc finger region" description="C2H2-type 1" evidence="2">
    <location>
        <begin position="244"/>
        <end position="266"/>
    </location>
</feature>
<feature type="zinc finger region" description="C2H2-type 2" evidence="2">
    <location>
        <begin position="272"/>
        <end position="294"/>
    </location>
</feature>
<feature type="zinc finger region" description="C2H2-type 3" evidence="2">
    <location>
        <begin position="299"/>
        <end position="321"/>
    </location>
</feature>
<feature type="zinc finger region" description="C2H2-type 4" evidence="2">
    <location>
        <begin position="327"/>
        <end position="349"/>
    </location>
</feature>
<feature type="zinc finger region" description="C2H2-type 5" evidence="2">
    <location>
        <begin position="355"/>
        <end position="377"/>
    </location>
</feature>
<feature type="zinc finger region" description="C2H2-type 6" evidence="2">
    <location>
        <begin position="383"/>
        <end position="405"/>
    </location>
</feature>
<feature type="zinc finger region" description="C2H2-type 7" evidence="2">
    <location>
        <begin position="411"/>
        <end position="433"/>
    </location>
</feature>
<feature type="zinc finger region" description="C2H2-type 8" evidence="2">
    <location>
        <begin position="439"/>
        <end position="461"/>
    </location>
</feature>
<feature type="zinc finger region" description="C2H2-type 9" evidence="2">
    <location>
        <begin position="467"/>
        <end position="489"/>
    </location>
</feature>
<feature type="zinc finger region" description="C2H2-type 10" evidence="2">
    <location>
        <begin position="495"/>
        <end position="517"/>
    </location>
</feature>
<feature type="region of interest" description="Disordered" evidence="3">
    <location>
        <begin position="1"/>
        <end position="30"/>
    </location>
</feature>
<proteinExistence type="uncertain"/>
<gene>
    <name type="primary">ZNF286B</name>
    <name type="synonym">ZNF286C</name>
    <name type="synonym">ZNF286L</name>
</gene>